<gene>
    <name evidence="1" type="primary">flgI2</name>
    <name type="ordered locus">RHOS4_29190</name>
    <name type="ORF">RSP_1307</name>
</gene>
<comment type="function">
    <text evidence="1">Assembles around the rod to form the L-ring and probably protects the motor/basal body from shearing forces during rotation.</text>
</comment>
<comment type="subunit">
    <text evidence="1">The basal body constitutes a major portion of the flagellar organelle and consists of four rings (L,P,S, and M) mounted on a central rod.</text>
</comment>
<comment type="subcellular location">
    <subcellularLocation>
        <location evidence="1">Periplasm</location>
    </subcellularLocation>
    <subcellularLocation>
        <location evidence="1">Bacterial flagellum basal body</location>
    </subcellularLocation>
</comment>
<comment type="similarity">
    <text evidence="1">Belongs to the FlgI family.</text>
</comment>
<evidence type="ECO:0000255" key="1">
    <source>
        <dbReference type="HAMAP-Rule" id="MF_00416"/>
    </source>
</evidence>
<organism>
    <name type="scientific">Cereibacter sphaeroides (strain ATCC 17023 / DSM 158 / JCM 6121 / CCUG 31486 / LMG 2827 / NBRC 12203 / NCIMB 8253 / ATH 2.4.1.)</name>
    <name type="common">Rhodobacter sphaeroides</name>
    <dbReference type="NCBI Taxonomy" id="272943"/>
    <lineage>
        <taxon>Bacteria</taxon>
        <taxon>Pseudomonadati</taxon>
        <taxon>Pseudomonadota</taxon>
        <taxon>Alphaproteobacteria</taxon>
        <taxon>Rhodobacterales</taxon>
        <taxon>Paracoccaceae</taxon>
        <taxon>Cereibacter</taxon>
    </lineage>
</organism>
<keyword id="KW-0975">Bacterial flagellum</keyword>
<keyword id="KW-0574">Periplasm</keyword>
<keyword id="KW-1185">Reference proteome</keyword>
<keyword id="KW-0732">Signal</keyword>
<name>FLGI2_CERS4</name>
<accession>Q3IY97</accession>
<sequence length="363" mass="38229">MLIRLLLLVICLAGPGVAEEIRIKDLVRFDGVRGNDLLGYGLVVGLNGTGDGLRNAPFTEDIMSNLLERLGVNVTGEQYRPKNVAAVFVTATLPPFARAGAQIDVTVSAMGDAKSLLGGTLVMTPLNGADGQIYAVAQGTIIAGGVSAEGQAARVVQGVPTAGTIPEGARVEREVEFEFARLDRVRLALRSPDFTTAGRIEDRINRELGRGVATMLDAGTVSLDLGRLGPPARVMGRIENLEVVPETVARVVVDQRSGTIVMGEDVRISRVAVAQGGLTLRVEEQPMVVQPNPFSRGETVVVPRTTASIQQRPGTGLAEIPAETSLSRVVAGLNALGVAPNDMIDILKSIHAAGALHAEFIVR</sequence>
<feature type="signal peptide" evidence="1">
    <location>
        <begin position="1"/>
        <end position="18"/>
    </location>
</feature>
<feature type="chain" id="PRO_0000236316" description="Flagellar P-ring protein 2">
    <location>
        <begin position="19"/>
        <end position="363"/>
    </location>
</feature>
<reference key="1">
    <citation type="submission" date="2005-09" db="EMBL/GenBank/DDBJ databases">
        <title>Complete sequence of chromosome 1 of Rhodobacter sphaeroides 2.4.1.</title>
        <authorList>
            <person name="Copeland A."/>
            <person name="Lucas S."/>
            <person name="Lapidus A."/>
            <person name="Barry K."/>
            <person name="Detter J.C."/>
            <person name="Glavina T."/>
            <person name="Hammon N."/>
            <person name="Israni S."/>
            <person name="Pitluck S."/>
            <person name="Richardson P."/>
            <person name="Mackenzie C."/>
            <person name="Choudhary M."/>
            <person name="Larimer F."/>
            <person name="Hauser L.J."/>
            <person name="Land M."/>
            <person name="Donohue T.J."/>
            <person name="Kaplan S."/>
        </authorList>
    </citation>
    <scope>NUCLEOTIDE SEQUENCE [LARGE SCALE GENOMIC DNA]</scope>
    <source>
        <strain>ATCC 17023 / DSM 158 / JCM 6121 / CCUG 31486 / LMG 2827 / NBRC 12203 / NCIMB 8253 / ATH 2.4.1.</strain>
    </source>
</reference>
<proteinExistence type="inferred from homology"/>
<dbReference type="EMBL" id="CP000143">
    <property type="protein sequence ID" value="ABA80487.1"/>
    <property type="molecule type" value="Genomic_DNA"/>
</dbReference>
<dbReference type="RefSeq" id="WP_011338864.1">
    <property type="nucleotide sequence ID" value="NC_007493.2"/>
</dbReference>
<dbReference type="RefSeq" id="YP_354388.1">
    <property type="nucleotide sequence ID" value="NC_007493.2"/>
</dbReference>
<dbReference type="SMR" id="Q3IY97"/>
<dbReference type="STRING" id="272943.RSP_1307"/>
<dbReference type="EnsemblBacteria" id="ABA80487">
    <property type="protein sequence ID" value="ABA80487"/>
    <property type="gene ID" value="RSP_1307"/>
</dbReference>
<dbReference type="GeneID" id="3720967"/>
<dbReference type="KEGG" id="rsp:RSP_1307"/>
<dbReference type="PATRIC" id="fig|272943.9.peg.3288"/>
<dbReference type="eggNOG" id="COG1706">
    <property type="taxonomic scope" value="Bacteria"/>
</dbReference>
<dbReference type="OrthoDB" id="9786431at2"/>
<dbReference type="PhylomeDB" id="Q3IY97"/>
<dbReference type="Proteomes" id="UP000002703">
    <property type="component" value="Chromosome 1"/>
</dbReference>
<dbReference type="GO" id="GO:0009428">
    <property type="term" value="C:bacterial-type flagellum basal body, distal rod, P ring"/>
    <property type="evidence" value="ECO:0007669"/>
    <property type="project" value="InterPro"/>
</dbReference>
<dbReference type="GO" id="GO:0030288">
    <property type="term" value="C:outer membrane-bounded periplasmic space"/>
    <property type="evidence" value="ECO:0007669"/>
    <property type="project" value="InterPro"/>
</dbReference>
<dbReference type="GO" id="GO:0005198">
    <property type="term" value="F:structural molecule activity"/>
    <property type="evidence" value="ECO:0007669"/>
    <property type="project" value="InterPro"/>
</dbReference>
<dbReference type="GO" id="GO:0071973">
    <property type="term" value="P:bacterial-type flagellum-dependent cell motility"/>
    <property type="evidence" value="ECO:0007669"/>
    <property type="project" value="InterPro"/>
</dbReference>
<dbReference type="HAMAP" id="MF_00416">
    <property type="entry name" value="FlgI"/>
    <property type="match status" value="1"/>
</dbReference>
<dbReference type="InterPro" id="IPR001782">
    <property type="entry name" value="Flag_FlgI"/>
</dbReference>
<dbReference type="NCBIfam" id="NF003676">
    <property type="entry name" value="PRK05303.1"/>
    <property type="match status" value="1"/>
</dbReference>
<dbReference type="PANTHER" id="PTHR30381">
    <property type="entry name" value="FLAGELLAR P-RING PERIPLASMIC PROTEIN FLGI"/>
    <property type="match status" value="1"/>
</dbReference>
<dbReference type="PANTHER" id="PTHR30381:SF0">
    <property type="entry name" value="FLAGELLAR P-RING PROTEIN"/>
    <property type="match status" value="1"/>
</dbReference>
<dbReference type="Pfam" id="PF02119">
    <property type="entry name" value="FlgI"/>
    <property type="match status" value="1"/>
</dbReference>
<dbReference type="PRINTS" id="PR01010">
    <property type="entry name" value="FLGPRINGFLGI"/>
</dbReference>
<protein>
    <recommendedName>
        <fullName evidence="1">Flagellar P-ring protein 2</fullName>
    </recommendedName>
    <alternativeName>
        <fullName evidence="1">Basal body P-ring protein 2</fullName>
    </alternativeName>
</protein>